<organism>
    <name type="scientific">Thermus thermophilus (strain ATCC BAA-163 / DSM 7039 / HB27)</name>
    <dbReference type="NCBI Taxonomy" id="262724"/>
    <lineage>
        <taxon>Bacteria</taxon>
        <taxon>Thermotogati</taxon>
        <taxon>Deinococcota</taxon>
        <taxon>Deinococci</taxon>
        <taxon>Thermales</taxon>
        <taxon>Thermaceae</taxon>
        <taxon>Thermus</taxon>
    </lineage>
</organism>
<gene>
    <name evidence="1" type="primary">dnaA</name>
    <name type="ordered locus">TT_C1608</name>
</gene>
<proteinExistence type="inferred from homology"/>
<dbReference type="EMBL" id="AE017221">
    <property type="protein sequence ID" value="AAS81950.1"/>
    <property type="status" value="ALT_INIT"/>
    <property type="molecule type" value="Genomic_DNA"/>
</dbReference>
<dbReference type="RefSeq" id="WP_008633967.1">
    <property type="nucleotide sequence ID" value="NC_005835.1"/>
</dbReference>
<dbReference type="SMR" id="Q72H87"/>
<dbReference type="KEGG" id="tth:TT_C1608"/>
<dbReference type="eggNOG" id="COG0593">
    <property type="taxonomic scope" value="Bacteria"/>
</dbReference>
<dbReference type="HOGENOM" id="CLU_026910_3_1_0"/>
<dbReference type="OrthoDB" id="9807019at2"/>
<dbReference type="Proteomes" id="UP000000592">
    <property type="component" value="Chromosome"/>
</dbReference>
<dbReference type="GO" id="GO:0005737">
    <property type="term" value="C:cytoplasm"/>
    <property type="evidence" value="ECO:0007669"/>
    <property type="project" value="UniProtKB-SubCell"/>
</dbReference>
<dbReference type="GO" id="GO:0005886">
    <property type="term" value="C:plasma membrane"/>
    <property type="evidence" value="ECO:0007669"/>
    <property type="project" value="TreeGrafter"/>
</dbReference>
<dbReference type="GO" id="GO:0005524">
    <property type="term" value="F:ATP binding"/>
    <property type="evidence" value="ECO:0007669"/>
    <property type="project" value="UniProtKB-UniRule"/>
</dbReference>
<dbReference type="GO" id="GO:0016887">
    <property type="term" value="F:ATP hydrolysis activity"/>
    <property type="evidence" value="ECO:0007669"/>
    <property type="project" value="InterPro"/>
</dbReference>
<dbReference type="GO" id="GO:0003688">
    <property type="term" value="F:DNA replication origin binding"/>
    <property type="evidence" value="ECO:0007669"/>
    <property type="project" value="UniProtKB-UniRule"/>
</dbReference>
<dbReference type="GO" id="GO:0008289">
    <property type="term" value="F:lipid binding"/>
    <property type="evidence" value="ECO:0007669"/>
    <property type="project" value="UniProtKB-KW"/>
</dbReference>
<dbReference type="GO" id="GO:0006270">
    <property type="term" value="P:DNA replication initiation"/>
    <property type="evidence" value="ECO:0007669"/>
    <property type="project" value="UniProtKB-UniRule"/>
</dbReference>
<dbReference type="GO" id="GO:0006275">
    <property type="term" value="P:regulation of DNA replication"/>
    <property type="evidence" value="ECO:0007669"/>
    <property type="project" value="UniProtKB-UniRule"/>
</dbReference>
<dbReference type="CDD" id="cd00009">
    <property type="entry name" value="AAA"/>
    <property type="match status" value="1"/>
</dbReference>
<dbReference type="CDD" id="cd06571">
    <property type="entry name" value="Bac_DnaA_C"/>
    <property type="match status" value="1"/>
</dbReference>
<dbReference type="FunFam" id="1.10.8.60:FF:000003">
    <property type="entry name" value="Chromosomal replication initiator protein DnaA"/>
    <property type="match status" value="1"/>
</dbReference>
<dbReference type="FunFam" id="3.40.50.300:FF:000150">
    <property type="entry name" value="Chromosomal replication initiator protein DnaA"/>
    <property type="match status" value="1"/>
</dbReference>
<dbReference type="Gene3D" id="1.10.1750.10">
    <property type="match status" value="1"/>
</dbReference>
<dbReference type="Gene3D" id="1.10.8.60">
    <property type="match status" value="1"/>
</dbReference>
<dbReference type="Gene3D" id="3.30.300.180">
    <property type="match status" value="1"/>
</dbReference>
<dbReference type="Gene3D" id="3.40.50.300">
    <property type="entry name" value="P-loop containing nucleotide triphosphate hydrolases"/>
    <property type="match status" value="1"/>
</dbReference>
<dbReference type="HAMAP" id="MF_00377">
    <property type="entry name" value="DnaA_bact"/>
    <property type="match status" value="1"/>
</dbReference>
<dbReference type="InterPro" id="IPR003593">
    <property type="entry name" value="AAA+_ATPase"/>
</dbReference>
<dbReference type="InterPro" id="IPR001957">
    <property type="entry name" value="Chromosome_initiator_DnaA"/>
</dbReference>
<dbReference type="InterPro" id="IPR020591">
    <property type="entry name" value="Chromosome_initiator_DnaA-like"/>
</dbReference>
<dbReference type="InterPro" id="IPR018312">
    <property type="entry name" value="Chromosome_initiator_DnaA_CS"/>
</dbReference>
<dbReference type="InterPro" id="IPR013159">
    <property type="entry name" value="DnaA_C"/>
</dbReference>
<dbReference type="InterPro" id="IPR013317">
    <property type="entry name" value="DnaA_dom"/>
</dbReference>
<dbReference type="InterPro" id="IPR024633">
    <property type="entry name" value="DnaA_N_dom"/>
</dbReference>
<dbReference type="InterPro" id="IPR038454">
    <property type="entry name" value="DnaA_N_sf"/>
</dbReference>
<dbReference type="InterPro" id="IPR027417">
    <property type="entry name" value="P-loop_NTPase"/>
</dbReference>
<dbReference type="InterPro" id="IPR010921">
    <property type="entry name" value="Trp_repressor/repl_initiator"/>
</dbReference>
<dbReference type="NCBIfam" id="TIGR00362">
    <property type="entry name" value="DnaA"/>
    <property type="match status" value="1"/>
</dbReference>
<dbReference type="PANTHER" id="PTHR30050">
    <property type="entry name" value="CHROMOSOMAL REPLICATION INITIATOR PROTEIN DNAA"/>
    <property type="match status" value="1"/>
</dbReference>
<dbReference type="PANTHER" id="PTHR30050:SF2">
    <property type="entry name" value="CHROMOSOMAL REPLICATION INITIATOR PROTEIN DNAA"/>
    <property type="match status" value="1"/>
</dbReference>
<dbReference type="Pfam" id="PF00308">
    <property type="entry name" value="Bac_DnaA"/>
    <property type="match status" value="1"/>
</dbReference>
<dbReference type="Pfam" id="PF08299">
    <property type="entry name" value="Bac_DnaA_C"/>
    <property type="match status" value="1"/>
</dbReference>
<dbReference type="Pfam" id="PF11638">
    <property type="entry name" value="DnaA_N"/>
    <property type="match status" value="1"/>
</dbReference>
<dbReference type="PRINTS" id="PR00051">
    <property type="entry name" value="DNAA"/>
</dbReference>
<dbReference type="SMART" id="SM00382">
    <property type="entry name" value="AAA"/>
    <property type="match status" value="1"/>
</dbReference>
<dbReference type="SMART" id="SM00760">
    <property type="entry name" value="Bac_DnaA_C"/>
    <property type="match status" value="1"/>
</dbReference>
<dbReference type="SUPFAM" id="SSF52540">
    <property type="entry name" value="P-loop containing nucleoside triphosphate hydrolases"/>
    <property type="match status" value="1"/>
</dbReference>
<dbReference type="SUPFAM" id="SSF48295">
    <property type="entry name" value="TrpR-like"/>
    <property type="match status" value="1"/>
</dbReference>
<dbReference type="PROSITE" id="PS01008">
    <property type="entry name" value="DNAA"/>
    <property type="match status" value="1"/>
</dbReference>
<name>DNAA_THET2</name>
<comment type="function">
    <text evidence="1">Plays an essential role in the initiation and regulation of chromosomal replication. ATP-DnaA binds to the origin of replication (oriC) to initiate formation of the DNA replication initiation complex once per cell cycle. Binds the DnaA box (a 9 base pair repeat at the origin) and separates the double-stranded (ds)DNA. Forms a right-handed helical filament on oriC DNA; dsDNA binds to the exterior of the filament while single-stranded (ss)DNA is stabiized in the filament's interior. The ATP-DnaA-oriC complex binds and stabilizes one strand of the AT-rich DNA unwinding element (DUE), permitting loading of DNA polymerase. After initiation quickly degrades to an ADP-DnaA complex that is not apt for DNA replication. Binds acidic phospholipids.</text>
</comment>
<comment type="subunit">
    <text evidence="1">Oligomerizes as a right-handed, spiral filament on DNA at oriC.</text>
</comment>
<comment type="subcellular location">
    <subcellularLocation>
        <location evidence="1">Cytoplasm</location>
    </subcellularLocation>
</comment>
<comment type="domain">
    <text evidence="1">Domain I is involved in oligomerization and binding regulators, domain II is flexibile and of varying length in different bacteria, domain III forms the AAA+ region, while domain IV binds dsDNA.</text>
</comment>
<comment type="similarity">
    <text evidence="1">Belongs to the DnaA family.</text>
</comment>
<comment type="sequence caution" evidence="2">
    <conflict type="erroneous initiation">
        <sequence resource="EMBL-CDS" id="AAS81950"/>
    </conflict>
</comment>
<feature type="chain" id="PRO_0000114287" description="Chromosomal replication initiator protein DnaA">
    <location>
        <begin position="1"/>
        <end position="436"/>
    </location>
</feature>
<feature type="region of interest" description="Domain I, interacts with DnaA modulators" evidence="1">
    <location>
        <begin position="1"/>
        <end position="80"/>
    </location>
</feature>
<feature type="region of interest" description="Domain II" evidence="1">
    <location>
        <begin position="80"/>
        <end position="100"/>
    </location>
</feature>
<feature type="region of interest" description="Domain III, AAA+ region" evidence="1">
    <location>
        <begin position="101"/>
        <end position="317"/>
    </location>
</feature>
<feature type="region of interest" description="Domain IV, binds dsDNA" evidence="1">
    <location>
        <begin position="318"/>
        <end position="436"/>
    </location>
</feature>
<feature type="binding site" evidence="1">
    <location>
        <position position="145"/>
    </location>
    <ligand>
        <name>ATP</name>
        <dbReference type="ChEBI" id="CHEBI:30616"/>
    </ligand>
</feature>
<feature type="binding site" evidence="1">
    <location>
        <position position="147"/>
    </location>
    <ligand>
        <name>ATP</name>
        <dbReference type="ChEBI" id="CHEBI:30616"/>
    </ligand>
</feature>
<feature type="binding site" evidence="1">
    <location>
        <position position="148"/>
    </location>
    <ligand>
        <name>ATP</name>
        <dbReference type="ChEBI" id="CHEBI:30616"/>
    </ligand>
</feature>
<feature type="binding site" evidence="1">
    <location>
        <position position="149"/>
    </location>
    <ligand>
        <name>ATP</name>
        <dbReference type="ChEBI" id="CHEBI:30616"/>
    </ligand>
</feature>
<protein>
    <recommendedName>
        <fullName evidence="1">Chromosomal replication initiator protein DnaA</fullName>
    </recommendedName>
</protein>
<evidence type="ECO:0000255" key="1">
    <source>
        <dbReference type="HAMAP-Rule" id="MF_00377"/>
    </source>
</evidence>
<evidence type="ECO:0000305" key="2"/>
<reference key="1">
    <citation type="journal article" date="2004" name="Nat. Biotechnol.">
        <title>The genome sequence of the extreme thermophile Thermus thermophilus.</title>
        <authorList>
            <person name="Henne A."/>
            <person name="Brueggemann H."/>
            <person name="Raasch C."/>
            <person name="Wiezer A."/>
            <person name="Hartsch T."/>
            <person name="Liesegang H."/>
            <person name="Johann A."/>
            <person name="Lienard T."/>
            <person name="Gohl O."/>
            <person name="Martinez-Arias R."/>
            <person name="Jacobi C."/>
            <person name="Starkuviene V."/>
            <person name="Schlenczeck S."/>
            <person name="Dencker S."/>
            <person name="Huber R."/>
            <person name="Klenk H.-P."/>
            <person name="Kramer W."/>
            <person name="Merkl R."/>
            <person name="Gottschalk G."/>
            <person name="Fritz H.-J."/>
        </authorList>
    </citation>
    <scope>NUCLEOTIDE SEQUENCE [LARGE SCALE GENOMIC DNA]</scope>
    <source>
        <strain>ATCC BAA-163 / DSM 7039 / HB27</strain>
    </source>
</reference>
<sequence length="436" mass="49360">MSHEAVWQHVLEHIRRSITEVEFHTWFERIRPLGIRDGVLELAVPTSFALDWIRRHYAGLIQEALGLLGAQAPRFELRVVPGVVVQEDIFQAAPAEAPRPKLNPKYTFENFVVGPNNSMAHAAAVAVAESPGRAYNPLFIYGGVGLGKTHLMHAVGHSVAKRFPHLKIEYVSTETFTNELINAIREDRMTEFRERYRSVDLLLVDDVQFIAGKERTQEEFFHTFNALYEAHKQIILSSDRPPKDILTLEARLRSRFEWGLITDIQPPDLETRIAILKMNAEQRGLRIPEDALEYIARQVTSNIRELEGALMRAIAFASLNGVELTRAVAAKALSDIFAPRELEADPLEIIRKVADHFGLKPEELTGSGRKKEVVLPRQLAMYLVRELTRASLPEIGQLFGGRDHTTVLYAIQKVQELAESDREVQGLLRTLREACT</sequence>
<keyword id="KW-0067">ATP-binding</keyword>
<keyword id="KW-0963">Cytoplasm</keyword>
<keyword id="KW-0235">DNA replication</keyword>
<keyword id="KW-0238">DNA-binding</keyword>
<keyword id="KW-0446">Lipid-binding</keyword>
<keyword id="KW-0547">Nucleotide-binding</keyword>
<accession>Q72H87</accession>